<reference key="1">
    <citation type="journal article" date="2010" name="J. Bacteriol.">
        <title>Whole genome sequences of two Xylella fastidiosa strains (M12 and M23) causing almond leaf scorch disease in California.</title>
        <authorList>
            <person name="Chen J."/>
            <person name="Xie G."/>
            <person name="Han S."/>
            <person name="Chertkov O."/>
            <person name="Sims D."/>
            <person name="Civerolo E.L."/>
        </authorList>
    </citation>
    <scope>NUCLEOTIDE SEQUENCE [LARGE SCALE GENOMIC DNA]</scope>
    <source>
        <strain>M12</strain>
    </source>
</reference>
<keyword id="KW-0227">DNA damage</keyword>
<keyword id="KW-0233">DNA recombination</keyword>
<keyword id="KW-0234">DNA repair</keyword>
<protein>
    <recommendedName>
        <fullName evidence="1">DNA repair protein RecO</fullName>
    </recommendedName>
    <alternativeName>
        <fullName evidence="1">Recombination protein O</fullName>
    </alternativeName>
</protein>
<comment type="function">
    <text evidence="1">Involved in DNA repair and RecF pathway recombination.</text>
</comment>
<comment type="similarity">
    <text evidence="1">Belongs to the RecO family.</text>
</comment>
<feature type="chain" id="PRO_1000099431" description="DNA repair protein RecO">
    <location>
        <begin position="1"/>
        <end position="243"/>
    </location>
</feature>
<name>RECO_XYLFM</name>
<sequence length="243" mass="27507">MLIEHEVAFVLHVRPWRETSLLVEVLTQAYGRLGLIARGVQGLKKQTLRAALQPLQWIRFSAIQRGELGQLRQAEALDTAPRLKGETMLASFYINELLLRLVPRHAPVNELYLAYSQTRERLRTNDSLAWSLRLFERDILETLGVGFNLECDANGTPLDPAAHYVLDPLEGPRRLLSEHNNAERRDTATGHVLLALAHKQIPNTNDLAGLRRSMRAVLLHHLGGRGLKSWEMIAAFRHQDTSP</sequence>
<accession>B0U3E0</accession>
<gene>
    <name evidence="1" type="primary">recO</name>
    <name type="ordered locus">Xfasm12_1446</name>
</gene>
<proteinExistence type="inferred from homology"/>
<dbReference type="EMBL" id="CP000941">
    <property type="protein sequence ID" value="ACA12369.1"/>
    <property type="molecule type" value="Genomic_DNA"/>
</dbReference>
<dbReference type="RefSeq" id="WP_004083433.1">
    <property type="nucleotide sequence ID" value="NC_010513.1"/>
</dbReference>
<dbReference type="SMR" id="B0U3E0"/>
<dbReference type="KEGG" id="xfm:Xfasm12_1446"/>
<dbReference type="HOGENOM" id="CLU_066645_1_0_6"/>
<dbReference type="GO" id="GO:0043590">
    <property type="term" value="C:bacterial nucleoid"/>
    <property type="evidence" value="ECO:0007669"/>
    <property type="project" value="TreeGrafter"/>
</dbReference>
<dbReference type="GO" id="GO:0006310">
    <property type="term" value="P:DNA recombination"/>
    <property type="evidence" value="ECO:0007669"/>
    <property type="project" value="UniProtKB-UniRule"/>
</dbReference>
<dbReference type="GO" id="GO:0006302">
    <property type="term" value="P:double-strand break repair"/>
    <property type="evidence" value="ECO:0007669"/>
    <property type="project" value="TreeGrafter"/>
</dbReference>
<dbReference type="Gene3D" id="2.40.50.140">
    <property type="entry name" value="Nucleic acid-binding proteins"/>
    <property type="match status" value="1"/>
</dbReference>
<dbReference type="Gene3D" id="1.20.1440.120">
    <property type="entry name" value="Recombination protein O, C-terminal domain"/>
    <property type="match status" value="1"/>
</dbReference>
<dbReference type="HAMAP" id="MF_00201">
    <property type="entry name" value="RecO"/>
    <property type="match status" value="1"/>
</dbReference>
<dbReference type="InterPro" id="IPR022572">
    <property type="entry name" value="DNA_rep/recomb_RecO_N"/>
</dbReference>
<dbReference type="InterPro" id="IPR012340">
    <property type="entry name" value="NA-bd_OB-fold"/>
</dbReference>
<dbReference type="InterPro" id="IPR003717">
    <property type="entry name" value="RecO"/>
</dbReference>
<dbReference type="InterPro" id="IPR042242">
    <property type="entry name" value="RecO_C"/>
</dbReference>
<dbReference type="NCBIfam" id="TIGR00613">
    <property type="entry name" value="reco"/>
    <property type="match status" value="1"/>
</dbReference>
<dbReference type="PANTHER" id="PTHR33991">
    <property type="entry name" value="DNA REPAIR PROTEIN RECO"/>
    <property type="match status" value="1"/>
</dbReference>
<dbReference type="PANTHER" id="PTHR33991:SF1">
    <property type="entry name" value="DNA REPAIR PROTEIN RECO"/>
    <property type="match status" value="1"/>
</dbReference>
<dbReference type="Pfam" id="PF02565">
    <property type="entry name" value="RecO_C"/>
    <property type="match status" value="1"/>
</dbReference>
<dbReference type="Pfam" id="PF11967">
    <property type="entry name" value="RecO_N"/>
    <property type="match status" value="1"/>
</dbReference>
<dbReference type="SUPFAM" id="SSF50249">
    <property type="entry name" value="Nucleic acid-binding proteins"/>
    <property type="match status" value="1"/>
</dbReference>
<organism>
    <name type="scientific">Xylella fastidiosa (strain M12)</name>
    <dbReference type="NCBI Taxonomy" id="405440"/>
    <lineage>
        <taxon>Bacteria</taxon>
        <taxon>Pseudomonadati</taxon>
        <taxon>Pseudomonadota</taxon>
        <taxon>Gammaproteobacteria</taxon>
        <taxon>Lysobacterales</taxon>
        <taxon>Lysobacteraceae</taxon>
        <taxon>Xylella</taxon>
    </lineage>
</organism>
<evidence type="ECO:0000255" key="1">
    <source>
        <dbReference type="HAMAP-Rule" id="MF_00201"/>
    </source>
</evidence>